<protein>
    <recommendedName>
        <fullName evidence="1">Protein GrpE</fullName>
    </recommendedName>
    <alternativeName>
        <fullName evidence="1">HSP-70 cofactor</fullName>
    </alternativeName>
</protein>
<feature type="chain" id="PRO_0000113746" description="Protein GrpE">
    <location>
        <begin position="1"/>
        <end position="220"/>
    </location>
</feature>
<comment type="function">
    <text evidence="1">Participates actively in the response to hyperosmotic and heat shock by preventing the aggregation of stress-denatured proteins, in association with DnaK and GrpE. It is the nucleotide exchange factor for DnaK and may function as a thermosensor. Unfolded proteins bind initially to DnaJ; upon interaction with the DnaJ-bound protein, DnaK hydrolyzes its bound ATP, resulting in the formation of a stable complex. GrpE releases ADP from DnaK; ATP binding to DnaK triggers the release of the substrate protein, thus completing the reaction cycle. Several rounds of ATP-dependent interactions between DnaJ, DnaK and GrpE are required for fully efficient folding.</text>
</comment>
<comment type="subunit">
    <text evidence="1">Homodimer.</text>
</comment>
<comment type="subcellular location">
    <subcellularLocation>
        <location evidence="1">Cytoplasm</location>
    </subcellularLocation>
</comment>
<comment type="similarity">
    <text evidence="1">Belongs to the GrpE family.</text>
</comment>
<name>GRPE_BARQU</name>
<accession>Q6G1E4</accession>
<keyword id="KW-0143">Chaperone</keyword>
<keyword id="KW-0963">Cytoplasm</keyword>
<keyword id="KW-0346">Stress response</keyword>
<gene>
    <name evidence="1" type="primary">grpE</name>
    <name type="ordered locus">BQ00500</name>
</gene>
<organism>
    <name type="scientific">Bartonella quintana (strain Toulouse)</name>
    <name type="common">Rochalimaea quintana</name>
    <dbReference type="NCBI Taxonomy" id="283165"/>
    <lineage>
        <taxon>Bacteria</taxon>
        <taxon>Pseudomonadati</taxon>
        <taxon>Pseudomonadota</taxon>
        <taxon>Alphaproteobacteria</taxon>
        <taxon>Hyphomicrobiales</taxon>
        <taxon>Bartonellaceae</taxon>
        <taxon>Bartonella</taxon>
    </lineage>
</organism>
<evidence type="ECO:0000255" key="1">
    <source>
        <dbReference type="HAMAP-Rule" id="MF_01151"/>
    </source>
</evidence>
<reference key="1">
    <citation type="journal article" date="2004" name="Proc. Natl. Acad. Sci. U.S.A.">
        <title>The louse-borne human pathogen Bartonella quintana is a genomic derivative of the zoonotic agent Bartonella henselae.</title>
        <authorList>
            <person name="Alsmark U.C.M."/>
            <person name="Frank A.C."/>
            <person name="Karlberg E.O."/>
            <person name="Legault B.-A."/>
            <person name="Ardell D.H."/>
            <person name="Canbaeck B."/>
            <person name="Eriksson A.-S."/>
            <person name="Naeslund A.K."/>
            <person name="Handley S.A."/>
            <person name="Huvet M."/>
            <person name="La Scola B."/>
            <person name="Holmberg M."/>
            <person name="Andersson S.G.E."/>
        </authorList>
    </citation>
    <scope>NUCLEOTIDE SEQUENCE [LARGE SCALE GENOMIC DNA]</scope>
    <source>
        <strain>Toulouse</strain>
    </source>
</reference>
<dbReference type="EMBL" id="BX897700">
    <property type="protein sequence ID" value="CAF25557.1"/>
    <property type="molecule type" value="Genomic_DNA"/>
</dbReference>
<dbReference type="RefSeq" id="WP_011178885.1">
    <property type="nucleotide sequence ID" value="NC_005955.1"/>
</dbReference>
<dbReference type="SMR" id="Q6G1E4"/>
<dbReference type="KEGG" id="bqu:BQ00500"/>
<dbReference type="eggNOG" id="COG0576">
    <property type="taxonomic scope" value="Bacteria"/>
</dbReference>
<dbReference type="HOGENOM" id="CLU_057217_6_2_5"/>
<dbReference type="OrthoDB" id="9789811at2"/>
<dbReference type="Proteomes" id="UP000000597">
    <property type="component" value="Chromosome"/>
</dbReference>
<dbReference type="GO" id="GO:0005737">
    <property type="term" value="C:cytoplasm"/>
    <property type="evidence" value="ECO:0007669"/>
    <property type="project" value="UniProtKB-SubCell"/>
</dbReference>
<dbReference type="GO" id="GO:0000774">
    <property type="term" value="F:adenyl-nucleotide exchange factor activity"/>
    <property type="evidence" value="ECO:0007669"/>
    <property type="project" value="InterPro"/>
</dbReference>
<dbReference type="GO" id="GO:0042803">
    <property type="term" value="F:protein homodimerization activity"/>
    <property type="evidence" value="ECO:0007669"/>
    <property type="project" value="InterPro"/>
</dbReference>
<dbReference type="GO" id="GO:0051087">
    <property type="term" value="F:protein-folding chaperone binding"/>
    <property type="evidence" value="ECO:0007669"/>
    <property type="project" value="InterPro"/>
</dbReference>
<dbReference type="GO" id="GO:0051082">
    <property type="term" value="F:unfolded protein binding"/>
    <property type="evidence" value="ECO:0007669"/>
    <property type="project" value="TreeGrafter"/>
</dbReference>
<dbReference type="GO" id="GO:0006457">
    <property type="term" value="P:protein folding"/>
    <property type="evidence" value="ECO:0007669"/>
    <property type="project" value="InterPro"/>
</dbReference>
<dbReference type="CDD" id="cd00446">
    <property type="entry name" value="GrpE"/>
    <property type="match status" value="1"/>
</dbReference>
<dbReference type="FunFam" id="2.30.22.10:FF:000001">
    <property type="entry name" value="Protein GrpE"/>
    <property type="match status" value="1"/>
</dbReference>
<dbReference type="Gene3D" id="3.90.20.20">
    <property type="match status" value="1"/>
</dbReference>
<dbReference type="Gene3D" id="2.30.22.10">
    <property type="entry name" value="Head domain of nucleotide exchange factor GrpE"/>
    <property type="match status" value="1"/>
</dbReference>
<dbReference type="HAMAP" id="MF_01151">
    <property type="entry name" value="GrpE"/>
    <property type="match status" value="1"/>
</dbReference>
<dbReference type="InterPro" id="IPR000740">
    <property type="entry name" value="GrpE"/>
</dbReference>
<dbReference type="InterPro" id="IPR013805">
    <property type="entry name" value="GrpE_coiled_coil"/>
</dbReference>
<dbReference type="InterPro" id="IPR009012">
    <property type="entry name" value="GrpE_head"/>
</dbReference>
<dbReference type="NCBIfam" id="NF010738">
    <property type="entry name" value="PRK14140.1"/>
    <property type="match status" value="1"/>
</dbReference>
<dbReference type="NCBIfam" id="NF010739">
    <property type="entry name" value="PRK14141.1"/>
    <property type="match status" value="1"/>
</dbReference>
<dbReference type="NCBIfam" id="NF010748">
    <property type="entry name" value="PRK14150.1"/>
    <property type="match status" value="1"/>
</dbReference>
<dbReference type="PANTHER" id="PTHR21237">
    <property type="entry name" value="GRPE PROTEIN"/>
    <property type="match status" value="1"/>
</dbReference>
<dbReference type="PANTHER" id="PTHR21237:SF23">
    <property type="entry name" value="GRPE PROTEIN HOMOLOG, MITOCHONDRIAL"/>
    <property type="match status" value="1"/>
</dbReference>
<dbReference type="Pfam" id="PF01025">
    <property type="entry name" value="GrpE"/>
    <property type="match status" value="1"/>
</dbReference>
<dbReference type="PRINTS" id="PR00773">
    <property type="entry name" value="GRPEPROTEIN"/>
</dbReference>
<dbReference type="SUPFAM" id="SSF58014">
    <property type="entry name" value="Coiled-coil domain of nucleotide exchange factor GrpE"/>
    <property type="match status" value="1"/>
</dbReference>
<dbReference type="SUPFAM" id="SSF51064">
    <property type="entry name" value="Head domain of nucleotide exchange factor GrpE"/>
    <property type="match status" value="1"/>
</dbReference>
<dbReference type="PROSITE" id="PS01071">
    <property type="entry name" value="GRPE"/>
    <property type="match status" value="1"/>
</dbReference>
<proteinExistence type="inferred from homology"/>
<sequence length="220" mass="24348">MSDEKNKFTDASFENCDLKNPVDRDTLKKATDEFLKTHEAEIHSEVKEENNEVSDPLAALQDENKELKDQLLRLVADMENLRRRTARDVADAKAYSIANFARDMLSVSDNLNRALEAIPEGAKENDAGLKTLAEGVEMTERAMIAALERHGVQKIYPEGQKFDPHFHQAMFEIPNCDVPDNTVQQVVQAGYIIGERVLRPAIVGVAKGGTKGVPVESGSA</sequence>